<reference key="1">
    <citation type="journal article" date="2005" name="Science">
        <title>The transcriptional landscape of the mammalian genome.</title>
        <authorList>
            <person name="Carninci P."/>
            <person name="Kasukawa T."/>
            <person name="Katayama S."/>
            <person name="Gough J."/>
            <person name="Frith M.C."/>
            <person name="Maeda N."/>
            <person name="Oyama R."/>
            <person name="Ravasi T."/>
            <person name="Lenhard B."/>
            <person name="Wells C."/>
            <person name="Kodzius R."/>
            <person name="Shimokawa K."/>
            <person name="Bajic V.B."/>
            <person name="Brenner S.E."/>
            <person name="Batalov S."/>
            <person name="Forrest A.R."/>
            <person name="Zavolan M."/>
            <person name="Davis M.J."/>
            <person name="Wilming L.G."/>
            <person name="Aidinis V."/>
            <person name="Allen J.E."/>
            <person name="Ambesi-Impiombato A."/>
            <person name="Apweiler R."/>
            <person name="Aturaliya R.N."/>
            <person name="Bailey T.L."/>
            <person name="Bansal M."/>
            <person name="Baxter L."/>
            <person name="Beisel K.W."/>
            <person name="Bersano T."/>
            <person name="Bono H."/>
            <person name="Chalk A.M."/>
            <person name="Chiu K.P."/>
            <person name="Choudhary V."/>
            <person name="Christoffels A."/>
            <person name="Clutterbuck D.R."/>
            <person name="Crowe M.L."/>
            <person name="Dalla E."/>
            <person name="Dalrymple B.P."/>
            <person name="de Bono B."/>
            <person name="Della Gatta G."/>
            <person name="di Bernardo D."/>
            <person name="Down T."/>
            <person name="Engstrom P."/>
            <person name="Fagiolini M."/>
            <person name="Faulkner G."/>
            <person name="Fletcher C.F."/>
            <person name="Fukushima T."/>
            <person name="Furuno M."/>
            <person name="Futaki S."/>
            <person name="Gariboldi M."/>
            <person name="Georgii-Hemming P."/>
            <person name="Gingeras T.R."/>
            <person name="Gojobori T."/>
            <person name="Green R.E."/>
            <person name="Gustincich S."/>
            <person name="Harbers M."/>
            <person name="Hayashi Y."/>
            <person name="Hensch T.K."/>
            <person name="Hirokawa N."/>
            <person name="Hill D."/>
            <person name="Huminiecki L."/>
            <person name="Iacono M."/>
            <person name="Ikeo K."/>
            <person name="Iwama A."/>
            <person name="Ishikawa T."/>
            <person name="Jakt M."/>
            <person name="Kanapin A."/>
            <person name="Katoh M."/>
            <person name="Kawasawa Y."/>
            <person name="Kelso J."/>
            <person name="Kitamura H."/>
            <person name="Kitano H."/>
            <person name="Kollias G."/>
            <person name="Krishnan S.P."/>
            <person name="Kruger A."/>
            <person name="Kummerfeld S.K."/>
            <person name="Kurochkin I.V."/>
            <person name="Lareau L.F."/>
            <person name="Lazarevic D."/>
            <person name="Lipovich L."/>
            <person name="Liu J."/>
            <person name="Liuni S."/>
            <person name="McWilliam S."/>
            <person name="Madan Babu M."/>
            <person name="Madera M."/>
            <person name="Marchionni L."/>
            <person name="Matsuda H."/>
            <person name="Matsuzawa S."/>
            <person name="Miki H."/>
            <person name="Mignone F."/>
            <person name="Miyake S."/>
            <person name="Morris K."/>
            <person name="Mottagui-Tabar S."/>
            <person name="Mulder N."/>
            <person name="Nakano N."/>
            <person name="Nakauchi H."/>
            <person name="Ng P."/>
            <person name="Nilsson R."/>
            <person name="Nishiguchi S."/>
            <person name="Nishikawa S."/>
            <person name="Nori F."/>
            <person name="Ohara O."/>
            <person name="Okazaki Y."/>
            <person name="Orlando V."/>
            <person name="Pang K.C."/>
            <person name="Pavan W.J."/>
            <person name="Pavesi G."/>
            <person name="Pesole G."/>
            <person name="Petrovsky N."/>
            <person name="Piazza S."/>
            <person name="Reed J."/>
            <person name="Reid J.F."/>
            <person name="Ring B.Z."/>
            <person name="Ringwald M."/>
            <person name="Rost B."/>
            <person name="Ruan Y."/>
            <person name="Salzberg S.L."/>
            <person name="Sandelin A."/>
            <person name="Schneider C."/>
            <person name="Schoenbach C."/>
            <person name="Sekiguchi K."/>
            <person name="Semple C.A."/>
            <person name="Seno S."/>
            <person name="Sessa L."/>
            <person name="Sheng Y."/>
            <person name="Shibata Y."/>
            <person name="Shimada H."/>
            <person name="Shimada K."/>
            <person name="Silva D."/>
            <person name="Sinclair B."/>
            <person name="Sperling S."/>
            <person name="Stupka E."/>
            <person name="Sugiura K."/>
            <person name="Sultana R."/>
            <person name="Takenaka Y."/>
            <person name="Taki K."/>
            <person name="Tammoja K."/>
            <person name="Tan S.L."/>
            <person name="Tang S."/>
            <person name="Taylor M.S."/>
            <person name="Tegner J."/>
            <person name="Teichmann S.A."/>
            <person name="Ueda H.R."/>
            <person name="van Nimwegen E."/>
            <person name="Verardo R."/>
            <person name="Wei C.L."/>
            <person name="Yagi K."/>
            <person name="Yamanishi H."/>
            <person name="Zabarovsky E."/>
            <person name="Zhu S."/>
            <person name="Zimmer A."/>
            <person name="Hide W."/>
            <person name="Bult C."/>
            <person name="Grimmond S.M."/>
            <person name="Teasdale R.D."/>
            <person name="Liu E.T."/>
            <person name="Brusic V."/>
            <person name="Quackenbush J."/>
            <person name="Wahlestedt C."/>
            <person name="Mattick J.S."/>
            <person name="Hume D.A."/>
            <person name="Kai C."/>
            <person name="Sasaki D."/>
            <person name="Tomaru Y."/>
            <person name="Fukuda S."/>
            <person name="Kanamori-Katayama M."/>
            <person name="Suzuki M."/>
            <person name="Aoki J."/>
            <person name="Arakawa T."/>
            <person name="Iida J."/>
            <person name="Imamura K."/>
            <person name="Itoh M."/>
            <person name="Kato T."/>
            <person name="Kawaji H."/>
            <person name="Kawagashira N."/>
            <person name="Kawashima T."/>
            <person name="Kojima M."/>
            <person name="Kondo S."/>
            <person name="Konno H."/>
            <person name="Nakano K."/>
            <person name="Ninomiya N."/>
            <person name="Nishio T."/>
            <person name="Okada M."/>
            <person name="Plessy C."/>
            <person name="Shibata K."/>
            <person name="Shiraki T."/>
            <person name="Suzuki S."/>
            <person name="Tagami M."/>
            <person name="Waki K."/>
            <person name="Watahiki A."/>
            <person name="Okamura-Oho Y."/>
            <person name="Suzuki H."/>
            <person name="Kawai J."/>
            <person name="Hayashizaki Y."/>
        </authorList>
    </citation>
    <scope>NUCLEOTIDE SEQUENCE [LARGE SCALE MRNA]</scope>
    <source>
        <strain>C57BL/6J</strain>
        <strain>NOD</strain>
        <tissue>Head</tissue>
        <tissue>Mammary gland</tissue>
        <tissue>Spleen</tissue>
    </source>
</reference>
<reference key="2">
    <citation type="journal article" date="2009" name="PLoS Biol.">
        <title>Lineage-specific biology revealed by a finished genome assembly of the mouse.</title>
        <authorList>
            <person name="Church D.M."/>
            <person name="Goodstadt L."/>
            <person name="Hillier L.W."/>
            <person name="Zody M.C."/>
            <person name="Goldstein S."/>
            <person name="She X."/>
            <person name="Bult C.J."/>
            <person name="Agarwala R."/>
            <person name="Cherry J.L."/>
            <person name="DiCuccio M."/>
            <person name="Hlavina W."/>
            <person name="Kapustin Y."/>
            <person name="Meric P."/>
            <person name="Maglott D."/>
            <person name="Birtle Z."/>
            <person name="Marques A.C."/>
            <person name="Graves T."/>
            <person name="Zhou S."/>
            <person name="Teague B."/>
            <person name="Potamousis K."/>
            <person name="Churas C."/>
            <person name="Place M."/>
            <person name="Herschleb J."/>
            <person name="Runnheim R."/>
            <person name="Forrest D."/>
            <person name="Amos-Landgraf J."/>
            <person name="Schwartz D.C."/>
            <person name="Cheng Z."/>
            <person name="Lindblad-Toh K."/>
            <person name="Eichler E.E."/>
            <person name="Ponting C.P."/>
        </authorList>
    </citation>
    <scope>NUCLEOTIDE SEQUENCE [LARGE SCALE GENOMIC DNA]</scope>
    <source>
        <strain>C57BL/6J</strain>
    </source>
</reference>
<reference key="3">
    <citation type="journal article" date="2004" name="Genome Res.">
        <title>The status, quality, and expansion of the NIH full-length cDNA project: the Mammalian Gene Collection (MGC).</title>
        <authorList>
            <consortium name="The MGC Project Team"/>
        </authorList>
    </citation>
    <scope>NUCLEOTIDE SEQUENCE [LARGE SCALE MRNA]</scope>
    <source>
        <strain>C57BL/6J</strain>
        <strain>FVB/N</strain>
        <tissue>Mammary tumor</tissue>
    </source>
</reference>
<reference key="4">
    <citation type="journal article" date="2010" name="Cell">
        <title>A tissue-specific atlas of mouse protein phosphorylation and expression.</title>
        <authorList>
            <person name="Huttlin E.L."/>
            <person name="Jedrychowski M.P."/>
            <person name="Elias J.E."/>
            <person name="Goswami T."/>
            <person name="Rad R."/>
            <person name="Beausoleil S.A."/>
            <person name="Villen J."/>
            <person name="Haas W."/>
            <person name="Sowa M.E."/>
            <person name="Gygi S.P."/>
        </authorList>
    </citation>
    <scope>PHOSPHORYLATION [LARGE SCALE ANALYSIS] AT SER-30; SER-49; SER-357; SER-361 AND SER-377</scope>
    <scope>IDENTIFICATION BY MASS SPECTROMETRY [LARGE SCALE ANALYSIS]</scope>
    <source>
        <tissue>Brain</tissue>
        <tissue>Brown adipose tissue</tissue>
        <tissue>Heart</tissue>
        <tissue>Kidney</tissue>
        <tissue>Liver</tissue>
        <tissue>Lung</tissue>
        <tissue>Spleen</tissue>
        <tissue>Testis</tissue>
    </source>
</reference>
<proteinExistence type="evidence at protein level"/>
<comment type="function">
    <text evidence="1">Functions as a guanine nucleotide exchange factor (GEF) for RAB11A.</text>
</comment>
<comment type="similarity">
    <text evidence="4">Belongs to the SH3BP5 family.</text>
</comment>
<dbReference type="EMBL" id="AK086088">
    <property type="protein sequence ID" value="BAC39606.1"/>
    <property type="molecule type" value="mRNA"/>
</dbReference>
<dbReference type="EMBL" id="AK144928">
    <property type="protein sequence ID" value="BAE26141.1"/>
    <property type="molecule type" value="mRNA"/>
</dbReference>
<dbReference type="EMBL" id="AK156171">
    <property type="protein sequence ID" value="BAE33611.1"/>
    <property type="molecule type" value="mRNA"/>
</dbReference>
<dbReference type="EMBL" id="AK172333">
    <property type="protein sequence ID" value="BAE42951.1"/>
    <property type="molecule type" value="mRNA"/>
</dbReference>
<dbReference type="EMBL" id="AL845463">
    <property type="status" value="NOT_ANNOTATED_CDS"/>
    <property type="molecule type" value="Genomic_DNA"/>
</dbReference>
<dbReference type="EMBL" id="BC003251">
    <property type="protein sequence ID" value="AAH03251.1"/>
    <property type="molecule type" value="mRNA"/>
</dbReference>
<dbReference type="EMBL" id="BC094418">
    <property type="protein sequence ID" value="AAH94418.1"/>
    <property type="molecule type" value="mRNA"/>
</dbReference>
<dbReference type="EMBL" id="BC013661">
    <property type="protein sequence ID" value="AAH13661.1"/>
    <property type="molecule type" value="mRNA"/>
</dbReference>
<dbReference type="CCDS" id="CCDS24728.1"/>
<dbReference type="RefSeq" id="NP_001154810.1">
    <property type="nucleotide sequence ID" value="NM_001161338.2"/>
</dbReference>
<dbReference type="RefSeq" id="NP_001295097.1">
    <property type="nucleotide sequence ID" value="NM_001308168.1"/>
</dbReference>
<dbReference type="RefSeq" id="NP_077800.3">
    <property type="nucleotide sequence ID" value="NM_024480.5"/>
</dbReference>
<dbReference type="RefSeq" id="XP_006534586.1">
    <property type="nucleotide sequence ID" value="XM_006534523.2"/>
</dbReference>
<dbReference type="SMR" id="Q99LH9"/>
<dbReference type="FunCoup" id="Q99LH9">
    <property type="interactions" value="2378"/>
</dbReference>
<dbReference type="STRING" id="10090.ENSMUSP00000112077"/>
<dbReference type="iPTMnet" id="Q99LH9"/>
<dbReference type="PhosphoSitePlus" id="Q99LH9"/>
<dbReference type="jPOST" id="Q99LH9"/>
<dbReference type="PaxDb" id="10090-ENSMUSP00000112077"/>
<dbReference type="PeptideAtlas" id="Q99LH9"/>
<dbReference type="ProteomicsDB" id="296445"/>
<dbReference type="Pumba" id="Q99LH9"/>
<dbReference type="Antibodypedia" id="47904">
    <property type="antibodies" value="23 antibodies from 9 providers"/>
</dbReference>
<dbReference type="DNASU" id="79566"/>
<dbReference type="Ensembl" id="ENSMUST00000073128.7">
    <property type="protein sequence ID" value="ENSMUSP00000072872.7"/>
    <property type="gene ID" value="ENSMUSG00000013646.18"/>
</dbReference>
<dbReference type="Ensembl" id="ENSMUST00000116376.9">
    <property type="protein sequence ID" value="ENSMUSP00000112077.3"/>
    <property type="gene ID" value="ENSMUSG00000013646.18"/>
</dbReference>
<dbReference type="GeneID" id="79566"/>
<dbReference type="KEGG" id="mmu:79566"/>
<dbReference type="UCSC" id="uc007jbe.2">
    <property type="organism name" value="mouse"/>
</dbReference>
<dbReference type="AGR" id="MGI:1933124"/>
<dbReference type="CTD" id="80851"/>
<dbReference type="MGI" id="MGI:1933124">
    <property type="gene designation" value="Sh3bp5l"/>
</dbReference>
<dbReference type="VEuPathDB" id="HostDB:ENSMUSG00000013646"/>
<dbReference type="eggNOG" id="KOG2008">
    <property type="taxonomic scope" value="Eukaryota"/>
</dbReference>
<dbReference type="GeneTree" id="ENSGT00390000018500"/>
<dbReference type="HOGENOM" id="CLU_043711_0_0_1"/>
<dbReference type="InParanoid" id="Q99LH9"/>
<dbReference type="OMA" id="QISAEIH"/>
<dbReference type="OrthoDB" id="446789at2759"/>
<dbReference type="PhylomeDB" id="Q99LH9"/>
<dbReference type="TreeFam" id="TF105573"/>
<dbReference type="BioGRID-ORCS" id="79566">
    <property type="hits" value="4 hits in 76 CRISPR screens"/>
</dbReference>
<dbReference type="ChiTaRS" id="Sh3bp5l">
    <property type="organism name" value="mouse"/>
</dbReference>
<dbReference type="PRO" id="PR:Q99LH9"/>
<dbReference type="Proteomes" id="UP000000589">
    <property type="component" value="Chromosome 11"/>
</dbReference>
<dbReference type="RNAct" id="Q99LH9">
    <property type="molecule type" value="protein"/>
</dbReference>
<dbReference type="Bgee" id="ENSMUSG00000013646">
    <property type="expression patterns" value="Expressed in lip and 239 other cell types or tissues"/>
</dbReference>
<dbReference type="GO" id="GO:0005085">
    <property type="term" value="F:guanyl-nucleotide exchange factor activity"/>
    <property type="evidence" value="ECO:0000250"/>
    <property type="project" value="UniProtKB"/>
</dbReference>
<dbReference type="GO" id="GO:0035556">
    <property type="term" value="P:intracellular signal transduction"/>
    <property type="evidence" value="ECO:0007669"/>
    <property type="project" value="InterPro"/>
</dbReference>
<dbReference type="InterPro" id="IPR007940">
    <property type="entry name" value="SH3BP5"/>
</dbReference>
<dbReference type="PANTHER" id="PTHR19423">
    <property type="entry name" value="SH3 DOMAIN-BINDING PROTEIN 5"/>
    <property type="match status" value="1"/>
</dbReference>
<dbReference type="PANTHER" id="PTHR19423:SF8">
    <property type="entry name" value="SH3 DOMAIN-BINDING PROTEIN 5-LIKE"/>
    <property type="match status" value="1"/>
</dbReference>
<dbReference type="Pfam" id="PF05276">
    <property type="entry name" value="SH3BP5"/>
    <property type="match status" value="1"/>
</dbReference>
<keyword id="KW-0175">Coiled coil</keyword>
<keyword id="KW-0344">Guanine-nucleotide releasing factor</keyword>
<keyword id="KW-0597">Phosphoprotein</keyword>
<keyword id="KW-1185">Reference proteome</keyword>
<name>3BP5L_MOUSE</name>
<gene>
    <name type="primary">Sh3bp5l</name>
    <name type="synonym">Kiaa1720</name>
</gene>
<feature type="chain" id="PRO_0000317509" description="SH3 domain-binding protein 5-like">
    <location>
        <begin position="1"/>
        <end position="392"/>
    </location>
</feature>
<feature type="region of interest" description="Disordered" evidence="3">
    <location>
        <begin position="1"/>
        <end position="57"/>
    </location>
</feature>
<feature type="region of interest" description="Disordered" evidence="3">
    <location>
        <begin position="275"/>
        <end position="332"/>
    </location>
</feature>
<feature type="region of interest" description="Disordered" evidence="3">
    <location>
        <begin position="364"/>
        <end position="392"/>
    </location>
</feature>
<feature type="coiled-coil region" evidence="2">
    <location>
        <begin position="59"/>
        <end position="140"/>
    </location>
</feature>
<feature type="coiled-coil region" evidence="2">
    <location>
        <begin position="169"/>
        <end position="272"/>
    </location>
</feature>
<feature type="compositionally biased region" description="Basic and acidic residues" evidence="3">
    <location>
        <begin position="18"/>
        <end position="28"/>
    </location>
</feature>
<feature type="compositionally biased region" description="Low complexity" evidence="3">
    <location>
        <begin position="317"/>
        <end position="332"/>
    </location>
</feature>
<feature type="compositionally biased region" description="Basic residues" evidence="3">
    <location>
        <begin position="383"/>
        <end position="392"/>
    </location>
</feature>
<feature type="modified residue" description="Phosphothreonine" evidence="1">
    <location>
        <position position="13"/>
    </location>
</feature>
<feature type="modified residue" description="Phosphoserine" evidence="5">
    <location>
        <position position="30"/>
    </location>
</feature>
<feature type="modified residue" description="Phosphoserine" evidence="5">
    <location>
        <position position="49"/>
    </location>
</feature>
<feature type="modified residue" description="Phosphoserine" evidence="1">
    <location>
        <position position="342"/>
    </location>
</feature>
<feature type="modified residue" description="Phosphoserine" evidence="1">
    <location>
        <position position="349"/>
    </location>
</feature>
<feature type="modified residue" description="Phosphoserine" evidence="5">
    <location>
        <position position="357"/>
    </location>
</feature>
<feature type="modified residue" description="Phosphoserine" evidence="5">
    <location>
        <position position="361"/>
    </location>
</feature>
<feature type="modified residue" description="Phosphoserine" evidence="5">
    <location>
        <position position="377"/>
    </location>
</feature>
<feature type="sequence conflict" description="In Ref. 1; BAC39606." evidence="4" ref="1">
    <original>R</original>
    <variation>P</variation>
    <location>
        <position position="148"/>
    </location>
</feature>
<feature type="sequence conflict" description="In Ref. 1; BAC39606." evidence="4" ref="1">
    <original>N</original>
    <variation>K</variation>
    <location>
        <position position="181"/>
    </location>
</feature>
<feature type="sequence conflict" description="In Ref. 1; BAE26141." evidence="4" ref="1">
    <original>D</original>
    <variation>N</variation>
    <location>
        <position position="304"/>
    </location>
</feature>
<protein>
    <recommendedName>
        <fullName>SH3 domain-binding protein 5-like</fullName>
        <shortName>SH3BP-5-like</shortName>
    </recommendedName>
</protein>
<organism>
    <name type="scientific">Mus musculus</name>
    <name type="common">Mouse</name>
    <dbReference type="NCBI Taxonomy" id="10090"/>
    <lineage>
        <taxon>Eukaryota</taxon>
        <taxon>Metazoa</taxon>
        <taxon>Chordata</taxon>
        <taxon>Craniata</taxon>
        <taxon>Vertebrata</taxon>
        <taxon>Euteleostomi</taxon>
        <taxon>Mammalia</taxon>
        <taxon>Eutheria</taxon>
        <taxon>Euarchontoglires</taxon>
        <taxon>Glires</taxon>
        <taxon>Rodentia</taxon>
        <taxon>Myomorpha</taxon>
        <taxon>Muroidea</taxon>
        <taxon>Muridae</taxon>
        <taxon>Murinae</taxon>
        <taxon>Mus</taxon>
        <taxon>Mus</taxon>
    </lineage>
</organism>
<sequence length="392" mass="43374">MADLKKAAGGRETPQGELRSEVVEDEGPRSPVAEEPGGSGSNSSETKLSPREEEELDPRIQEELEHLNQASEEINQVELQLDEARTTYRRILQESARKLNTQGSHLGSCIEKARPYYEARRLAKEAQQETQKAALRYERAVSMHNAAREMVFVAEQGVMADKNRLDPTWQEMLNHATCKVNEAEEERLRGEREHQRVTRLCQQAEARVQALQKTLRRAIGKSRPYFELKAQFSQILEEHKAKVTELEQQVAQAKTRYSVALRNLEQISEQIHARRRGLPPHPLGPRRSSPVGAEAGPEGIEDGDSGIEGAEGGGLEEGSSLGPGPGPDTDTLSLLSLRTVASDLQKCDSVEHLRGLSDHASLDGQELGAQSRGRRGSDIGVRGGRHQRSVSL</sequence>
<accession>Q99LH9</accession>
<accession>Q3UMF7</accession>
<accession>Q8BUC2</accession>
<accession>Q91YX6</accession>
<evidence type="ECO:0000250" key="1">
    <source>
        <dbReference type="UniProtKB" id="Q7L8J4"/>
    </source>
</evidence>
<evidence type="ECO:0000255" key="2"/>
<evidence type="ECO:0000256" key="3">
    <source>
        <dbReference type="SAM" id="MobiDB-lite"/>
    </source>
</evidence>
<evidence type="ECO:0000305" key="4"/>
<evidence type="ECO:0007744" key="5">
    <source>
    </source>
</evidence>